<sequence length="253" mass="27693">MITNTAAYQFAPIHDPQQLADSVLERAQQRALKGSVLVAEEGINLFLAGDAEQIASFYAWLHADARFAQMRVKYSHSAEQPFARLKVKVKPEIISFRRDDASPLQGRAPSVAPAVLRKWMQQGHDDHGRPLVLLDTRNAQEVAYGTFQGALTLPIDKFTELPEALQPHRAALADATVVSFCTGGIRCEKAALWMHAEGMDNVLQLEGGILGYFEDVGGEGYDGRCFVFDERVALDAELRPLVDGAACADAGKI</sequence>
<comment type="function">
    <text evidence="1">Catalyzes oxygen-dependent 5-hydroxyuridine (ho5U) modification at position 34 in tRNAs.</text>
</comment>
<comment type="catalytic activity">
    <reaction evidence="1">
        <text>uridine(34) in tRNA + AH2 + O2 = 5-hydroxyuridine(34) in tRNA + A + H2O</text>
        <dbReference type="Rhea" id="RHEA:64224"/>
        <dbReference type="Rhea" id="RHEA-COMP:11727"/>
        <dbReference type="Rhea" id="RHEA-COMP:13381"/>
        <dbReference type="ChEBI" id="CHEBI:13193"/>
        <dbReference type="ChEBI" id="CHEBI:15377"/>
        <dbReference type="ChEBI" id="CHEBI:15379"/>
        <dbReference type="ChEBI" id="CHEBI:17499"/>
        <dbReference type="ChEBI" id="CHEBI:65315"/>
        <dbReference type="ChEBI" id="CHEBI:136877"/>
    </reaction>
</comment>
<comment type="similarity">
    <text evidence="1">Belongs to the TrhO family.</text>
</comment>
<evidence type="ECO:0000255" key="1">
    <source>
        <dbReference type="HAMAP-Rule" id="MF_00469"/>
    </source>
</evidence>
<protein>
    <recommendedName>
        <fullName evidence="1">tRNA uridine(34) hydroxylase</fullName>
        <ecNumber evidence="1">1.14.-.-</ecNumber>
    </recommendedName>
    <alternativeName>
        <fullName evidence="1">tRNA hydroxylation protein O</fullName>
    </alternativeName>
</protein>
<keyword id="KW-0560">Oxidoreductase</keyword>
<keyword id="KW-1185">Reference proteome</keyword>
<keyword id="KW-0819">tRNA processing</keyword>
<reference key="1">
    <citation type="journal article" date="2002" name="Nature">
        <title>Comparison of the genomes of two Xanthomonas pathogens with differing host specificities.</title>
        <authorList>
            <person name="da Silva A.C.R."/>
            <person name="Ferro J.A."/>
            <person name="Reinach F.C."/>
            <person name="Farah C.S."/>
            <person name="Furlan L.R."/>
            <person name="Quaggio R.B."/>
            <person name="Monteiro-Vitorello C.B."/>
            <person name="Van Sluys M.A."/>
            <person name="Almeida N.F. Jr."/>
            <person name="Alves L.M.C."/>
            <person name="do Amaral A.M."/>
            <person name="Bertolini M.C."/>
            <person name="Camargo L.E.A."/>
            <person name="Camarotte G."/>
            <person name="Cannavan F."/>
            <person name="Cardozo J."/>
            <person name="Chambergo F."/>
            <person name="Ciapina L.P."/>
            <person name="Cicarelli R.M.B."/>
            <person name="Coutinho L.L."/>
            <person name="Cursino-Santos J.R."/>
            <person name="El-Dorry H."/>
            <person name="Faria J.B."/>
            <person name="Ferreira A.J.S."/>
            <person name="Ferreira R.C.C."/>
            <person name="Ferro M.I.T."/>
            <person name="Formighieri E.F."/>
            <person name="Franco M.C."/>
            <person name="Greggio C.C."/>
            <person name="Gruber A."/>
            <person name="Katsuyama A.M."/>
            <person name="Kishi L.T."/>
            <person name="Leite R.P."/>
            <person name="Lemos E.G.M."/>
            <person name="Lemos M.V.F."/>
            <person name="Locali E.C."/>
            <person name="Machado M.A."/>
            <person name="Madeira A.M.B.N."/>
            <person name="Martinez-Rossi N.M."/>
            <person name="Martins E.C."/>
            <person name="Meidanis J."/>
            <person name="Menck C.F.M."/>
            <person name="Miyaki C.Y."/>
            <person name="Moon D.H."/>
            <person name="Moreira L.M."/>
            <person name="Novo M.T.M."/>
            <person name="Okura V.K."/>
            <person name="Oliveira M.C."/>
            <person name="Oliveira V.R."/>
            <person name="Pereira H.A."/>
            <person name="Rossi A."/>
            <person name="Sena J.A.D."/>
            <person name="Silva C."/>
            <person name="de Souza R.F."/>
            <person name="Spinola L.A.F."/>
            <person name="Takita M.A."/>
            <person name="Tamura R.E."/>
            <person name="Teixeira E.C."/>
            <person name="Tezza R.I.D."/>
            <person name="Trindade dos Santos M."/>
            <person name="Truffi D."/>
            <person name="Tsai S.M."/>
            <person name="White F.F."/>
            <person name="Setubal J.C."/>
            <person name="Kitajima J.P."/>
        </authorList>
    </citation>
    <scope>NUCLEOTIDE SEQUENCE [LARGE SCALE GENOMIC DNA]</scope>
    <source>
        <strain>ATCC 33913 / DSM 3586 / NCPPB 528 / LMG 568 / P 25</strain>
    </source>
</reference>
<proteinExistence type="inferred from homology"/>
<feature type="chain" id="PRO_0000161540" description="tRNA uridine(34) hydroxylase">
    <location>
        <begin position="1"/>
        <end position="253"/>
    </location>
</feature>
<feature type="domain" description="Rhodanese" evidence="1">
    <location>
        <begin position="127"/>
        <end position="221"/>
    </location>
</feature>
<feature type="active site" description="Cysteine persulfide intermediate" evidence="1">
    <location>
        <position position="181"/>
    </location>
</feature>
<gene>
    <name evidence="1" type="primary">trhO</name>
    <name type="ordered locus">XCC2086</name>
</gene>
<dbReference type="EC" id="1.14.-.-" evidence="1"/>
<dbReference type="EMBL" id="AE008922">
    <property type="protein sequence ID" value="AAM41375.1"/>
    <property type="molecule type" value="Genomic_DNA"/>
</dbReference>
<dbReference type="RefSeq" id="NP_637451.1">
    <property type="nucleotide sequence ID" value="NC_003902.1"/>
</dbReference>
<dbReference type="RefSeq" id="WP_011037242.1">
    <property type="nucleotide sequence ID" value="NC_003902.1"/>
</dbReference>
<dbReference type="SMR" id="Q8P8Z2"/>
<dbReference type="STRING" id="190485.XCC2086"/>
<dbReference type="EnsemblBacteria" id="AAM41375">
    <property type="protein sequence ID" value="AAM41375"/>
    <property type="gene ID" value="XCC2086"/>
</dbReference>
<dbReference type="KEGG" id="xcc:XCC2086"/>
<dbReference type="PATRIC" id="fig|190485.4.peg.2234"/>
<dbReference type="eggNOG" id="COG1054">
    <property type="taxonomic scope" value="Bacteria"/>
</dbReference>
<dbReference type="HOGENOM" id="CLU_038878_0_1_6"/>
<dbReference type="OrthoDB" id="9778326at2"/>
<dbReference type="Proteomes" id="UP000001010">
    <property type="component" value="Chromosome"/>
</dbReference>
<dbReference type="GO" id="GO:0016705">
    <property type="term" value="F:oxidoreductase activity, acting on paired donors, with incorporation or reduction of molecular oxygen"/>
    <property type="evidence" value="ECO:0007669"/>
    <property type="project" value="UniProtKB-UniRule"/>
</dbReference>
<dbReference type="GO" id="GO:0006400">
    <property type="term" value="P:tRNA modification"/>
    <property type="evidence" value="ECO:0007669"/>
    <property type="project" value="UniProtKB-UniRule"/>
</dbReference>
<dbReference type="Gene3D" id="3.30.70.100">
    <property type="match status" value="1"/>
</dbReference>
<dbReference type="Gene3D" id="3.40.250.10">
    <property type="entry name" value="Rhodanese-like domain"/>
    <property type="match status" value="1"/>
</dbReference>
<dbReference type="HAMAP" id="MF_00469">
    <property type="entry name" value="TrhO"/>
    <property type="match status" value="1"/>
</dbReference>
<dbReference type="InterPro" id="IPR001763">
    <property type="entry name" value="Rhodanese-like_dom"/>
</dbReference>
<dbReference type="InterPro" id="IPR036873">
    <property type="entry name" value="Rhodanese-like_dom_sf"/>
</dbReference>
<dbReference type="InterPro" id="IPR020936">
    <property type="entry name" value="TrhO"/>
</dbReference>
<dbReference type="InterPro" id="IPR040503">
    <property type="entry name" value="TRHO_N"/>
</dbReference>
<dbReference type="NCBIfam" id="NF003703">
    <property type="entry name" value="PRK05320.1"/>
    <property type="match status" value="1"/>
</dbReference>
<dbReference type="PANTHER" id="PTHR43268:SF3">
    <property type="entry name" value="RHODANESE-LIKE DOMAIN-CONTAINING PROTEIN 7-RELATED"/>
    <property type="match status" value="1"/>
</dbReference>
<dbReference type="PANTHER" id="PTHR43268">
    <property type="entry name" value="THIOSULFATE SULFURTRANSFERASE/RHODANESE-LIKE DOMAIN-CONTAINING PROTEIN 2"/>
    <property type="match status" value="1"/>
</dbReference>
<dbReference type="Pfam" id="PF00581">
    <property type="entry name" value="Rhodanese"/>
    <property type="match status" value="1"/>
</dbReference>
<dbReference type="Pfam" id="PF17773">
    <property type="entry name" value="UPF0176_N"/>
    <property type="match status" value="1"/>
</dbReference>
<dbReference type="SMART" id="SM00450">
    <property type="entry name" value="RHOD"/>
    <property type="match status" value="1"/>
</dbReference>
<dbReference type="SUPFAM" id="SSF52821">
    <property type="entry name" value="Rhodanese/Cell cycle control phosphatase"/>
    <property type="match status" value="1"/>
</dbReference>
<dbReference type="PROSITE" id="PS50206">
    <property type="entry name" value="RHODANESE_3"/>
    <property type="match status" value="1"/>
</dbReference>
<organism>
    <name type="scientific">Xanthomonas campestris pv. campestris (strain ATCC 33913 / DSM 3586 / NCPPB 528 / LMG 568 / P 25)</name>
    <dbReference type="NCBI Taxonomy" id="190485"/>
    <lineage>
        <taxon>Bacteria</taxon>
        <taxon>Pseudomonadati</taxon>
        <taxon>Pseudomonadota</taxon>
        <taxon>Gammaproteobacteria</taxon>
        <taxon>Lysobacterales</taxon>
        <taxon>Lysobacteraceae</taxon>
        <taxon>Xanthomonas</taxon>
    </lineage>
</organism>
<accession>Q8P8Z2</accession>
<name>TRHO_XANCP</name>